<comment type="function">
    <text evidence="1">Substrate-specific adapter of a BCR (BTB-CUL3-RBX1) E3 ubiquitin ligase complex involved in various processes, such as translation homeostasis and lipid synthesis. The BCR(KLHL25) ubiquitin ligase complex acts by mediating ubiquitination of hypophosphorylated eif4ebp1 (4E-BP1): ubiquitination and subsequent degradation of hypophosphorylated EIF4EBP1 (4E-BP1) probably serves as a homeostatic mechanism to maintain translation and prevent eIF4E inhibition when eIF4E levels are low. The BCR(KLHL25) complex also acts as a regulator of lipid synthesis by mediating ubiquitination and degradation of ACLY, thereby inhibiting lipid synthesis.</text>
</comment>
<comment type="pathway">
    <text evidence="1">Protein modification; protein ubiquitination.</text>
</comment>
<comment type="subunit">
    <text evidence="1">Component of the BCR(KLHL25) E3 ubiquitin ligase complex, at least composed of cul3, klhl25 and rbx1.</text>
</comment>
<accession>Q0D2A9</accession>
<feature type="chain" id="PRO_0000272312" description="Kelch-like protein 25">
    <location>
        <begin position="1"/>
        <end position="589"/>
    </location>
</feature>
<feature type="domain" description="BTB" evidence="2">
    <location>
        <begin position="46"/>
        <end position="114"/>
    </location>
</feature>
<feature type="domain" description="BACK">
    <location>
        <begin position="149"/>
        <end position="250"/>
    </location>
</feature>
<feature type="repeat" description="Kelch 1">
    <location>
        <begin position="296"/>
        <end position="340"/>
    </location>
</feature>
<feature type="repeat" description="Kelch 2">
    <location>
        <begin position="341"/>
        <end position="388"/>
    </location>
</feature>
<feature type="repeat" description="Kelch 3">
    <location>
        <begin position="389"/>
        <end position="444"/>
    </location>
</feature>
<feature type="repeat" description="Kelch 4">
    <location>
        <begin position="446"/>
        <end position="492"/>
    </location>
</feature>
<feature type="repeat" description="Kelch 5">
    <location>
        <begin position="493"/>
        <end position="538"/>
    </location>
</feature>
<feature type="repeat" description="Kelch 6">
    <location>
        <begin position="539"/>
        <end position="585"/>
    </location>
</feature>
<protein>
    <recommendedName>
        <fullName evidence="3">Kelch-like protein 25</fullName>
    </recommendedName>
</protein>
<proteinExistence type="evidence at transcript level"/>
<keyword id="KW-0880">Kelch repeat</keyword>
<keyword id="KW-1185">Reference proteome</keyword>
<keyword id="KW-0677">Repeat</keyword>
<keyword id="KW-0810">Translation regulation</keyword>
<keyword id="KW-0833">Ubl conjugation pathway</keyword>
<reference key="1">
    <citation type="submission" date="2006-08" db="EMBL/GenBank/DDBJ databases">
        <authorList>
            <consortium name="NIH - Xenopus Gene Collection (XGC) project"/>
        </authorList>
    </citation>
    <scope>NUCLEOTIDE SEQUENCE [LARGE SCALE MRNA]</scope>
    <source>
        <strain>N6</strain>
        <tissue>Ovary</tissue>
    </source>
</reference>
<dbReference type="EMBL" id="BC122041">
    <property type="protein sequence ID" value="AAI22042.1"/>
    <property type="molecule type" value="mRNA"/>
</dbReference>
<dbReference type="RefSeq" id="NP_001072541.1">
    <property type="nucleotide sequence ID" value="NM_001079073.1"/>
</dbReference>
<dbReference type="RefSeq" id="XP_012814705.1">
    <property type="nucleotide sequence ID" value="XM_012959251.3"/>
</dbReference>
<dbReference type="RefSeq" id="XP_012814706.1">
    <property type="nucleotide sequence ID" value="XM_012959252.3"/>
</dbReference>
<dbReference type="RefSeq" id="XP_012814709.1">
    <property type="nucleotide sequence ID" value="XM_012959255.3"/>
</dbReference>
<dbReference type="RefSeq" id="XP_017947662.1">
    <property type="nucleotide sequence ID" value="XM_018092173.2"/>
</dbReference>
<dbReference type="SMR" id="Q0D2A9"/>
<dbReference type="FunCoup" id="Q0D2A9">
    <property type="interactions" value="150"/>
</dbReference>
<dbReference type="STRING" id="8364.ENSXETP00000051270"/>
<dbReference type="PaxDb" id="8364-ENSXETP00000016578"/>
<dbReference type="DNASU" id="779996"/>
<dbReference type="GeneID" id="779996"/>
<dbReference type="KEGG" id="xtr:779996"/>
<dbReference type="AGR" id="Xenbase:XB-GENE-964636"/>
<dbReference type="CTD" id="64410"/>
<dbReference type="Xenbase" id="XB-GENE-964636">
    <property type="gene designation" value="klhl25"/>
</dbReference>
<dbReference type="eggNOG" id="KOG4441">
    <property type="taxonomic scope" value="Eukaryota"/>
</dbReference>
<dbReference type="HOGENOM" id="CLU_004253_14_3_1"/>
<dbReference type="InParanoid" id="Q0D2A9"/>
<dbReference type="OMA" id="SNCLAMM"/>
<dbReference type="OrthoDB" id="6359816at2759"/>
<dbReference type="PhylomeDB" id="Q0D2A9"/>
<dbReference type="TreeFam" id="TF329218"/>
<dbReference type="UniPathway" id="UPA00143"/>
<dbReference type="Proteomes" id="UP000008143">
    <property type="component" value="Chromosome 3"/>
</dbReference>
<dbReference type="Bgee" id="ENSXETG00000007622">
    <property type="expression patterns" value="Expressed in ovary and 13 other cell types or tissues"/>
</dbReference>
<dbReference type="GO" id="GO:0031463">
    <property type="term" value="C:Cul3-RING ubiquitin ligase complex"/>
    <property type="evidence" value="ECO:0000250"/>
    <property type="project" value="UniProtKB"/>
</dbReference>
<dbReference type="GO" id="GO:1990756">
    <property type="term" value="F:ubiquitin-like ligase-substrate adaptor activity"/>
    <property type="evidence" value="ECO:0000250"/>
    <property type="project" value="UniProtKB"/>
</dbReference>
<dbReference type="GO" id="GO:0032831">
    <property type="term" value="P:positive regulation of CD4-positive, CD25-positive, alpha-beta regulatory T cell differentiation"/>
    <property type="evidence" value="ECO:0000250"/>
    <property type="project" value="UniProtKB"/>
</dbReference>
<dbReference type="GO" id="GO:0046321">
    <property type="term" value="P:positive regulation of fatty acid oxidation"/>
    <property type="evidence" value="ECO:0000250"/>
    <property type="project" value="UniProtKB"/>
</dbReference>
<dbReference type="GO" id="GO:0016567">
    <property type="term" value="P:protein ubiquitination"/>
    <property type="evidence" value="ECO:0000250"/>
    <property type="project" value="UniProtKB"/>
</dbReference>
<dbReference type="GO" id="GO:0006446">
    <property type="term" value="P:regulation of translational initiation"/>
    <property type="evidence" value="ECO:0000250"/>
    <property type="project" value="UniProtKB"/>
</dbReference>
<dbReference type="GO" id="GO:0006511">
    <property type="term" value="P:ubiquitin-dependent protein catabolic process"/>
    <property type="evidence" value="ECO:0000250"/>
    <property type="project" value="UniProtKB"/>
</dbReference>
<dbReference type="FunFam" id="2.120.10.80:FF:000003">
    <property type="entry name" value="Ectoderm-neural cortex protein 1"/>
    <property type="match status" value="1"/>
</dbReference>
<dbReference type="FunFam" id="2.120.10.80:FF:000004">
    <property type="entry name" value="Ectoderm-neural cortex protein 1"/>
    <property type="match status" value="1"/>
</dbReference>
<dbReference type="FunFam" id="3.30.710.10:FF:000023">
    <property type="entry name" value="Ectoderm-neural cortex protein 1"/>
    <property type="match status" value="1"/>
</dbReference>
<dbReference type="FunFam" id="1.25.40.420:FF:000001">
    <property type="entry name" value="Kelch-like family member 12"/>
    <property type="match status" value="1"/>
</dbReference>
<dbReference type="Gene3D" id="1.25.40.420">
    <property type="match status" value="1"/>
</dbReference>
<dbReference type="Gene3D" id="2.120.10.80">
    <property type="entry name" value="Kelch-type beta propeller"/>
    <property type="match status" value="2"/>
</dbReference>
<dbReference type="Gene3D" id="3.30.710.10">
    <property type="entry name" value="Potassium Channel Kv1.1, Chain A"/>
    <property type="match status" value="1"/>
</dbReference>
<dbReference type="InterPro" id="IPR011705">
    <property type="entry name" value="BACK"/>
</dbReference>
<dbReference type="InterPro" id="IPR017096">
    <property type="entry name" value="BTB-kelch_protein"/>
</dbReference>
<dbReference type="InterPro" id="IPR000210">
    <property type="entry name" value="BTB/POZ_dom"/>
</dbReference>
<dbReference type="InterPro" id="IPR015915">
    <property type="entry name" value="Kelch-typ_b-propeller"/>
</dbReference>
<dbReference type="InterPro" id="IPR006652">
    <property type="entry name" value="Kelch_1"/>
</dbReference>
<dbReference type="InterPro" id="IPR011333">
    <property type="entry name" value="SKP1/BTB/POZ_sf"/>
</dbReference>
<dbReference type="PANTHER" id="PTHR24412">
    <property type="entry name" value="KELCH PROTEIN"/>
    <property type="match status" value="1"/>
</dbReference>
<dbReference type="PANTHER" id="PTHR24412:SF487">
    <property type="entry name" value="KELCH-LIKE PROTEIN 25"/>
    <property type="match status" value="1"/>
</dbReference>
<dbReference type="Pfam" id="PF07707">
    <property type="entry name" value="BACK"/>
    <property type="match status" value="1"/>
</dbReference>
<dbReference type="Pfam" id="PF00651">
    <property type="entry name" value="BTB"/>
    <property type="match status" value="1"/>
</dbReference>
<dbReference type="Pfam" id="PF01344">
    <property type="entry name" value="Kelch_1"/>
    <property type="match status" value="1"/>
</dbReference>
<dbReference type="Pfam" id="PF24681">
    <property type="entry name" value="Kelch_KLHDC2_KLHL20_DRC7"/>
    <property type="match status" value="1"/>
</dbReference>
<dbReference type="PIRSF" id="PIRSF037037">
    <property type="entry name" value="Kelch-like_protein_gigaxonin"/>
    <property type="match status" value="1"/>
</dbReference>
<dbReference type="SMART" id="SM00875">
    <property type="entry name" value="BACK"/>
    <property type="match status" value="1"/>
</dbReference>
<dbReference type="SMART" id="SM00225">
    <property type="entry name" value="BTB"/>
    <property type="match status" value="1"/>
</dbReference>
<dbReference type="SMART" id="SM00612">
    <property type="entry name" value="Kelch"/>
    <property type="match status" value="6"/>
</dbReference>
<dbReference type="SUPFAM" id="SSF117281">
    <property type="entry name" value="Kelch motif"/>
    <property type="match status" value="1"/>
</dbReference>
<dbReference type="SUPFAM" id="SSF54695">
    <property type="entry name" value="POZ domain"/>
    <property type="match status" value="1"/>
</dbReference>
<dbReference type="PROSITE" id="PS50097">
    <property type="entry name" value="BTB"/>
    <property type="match status" value="1"/>
</dbReference>
<evidence type="ECO:0000250" key="1">
    <source>
        <dbReference type="UniProtKB" id="Q9H0H3"/>
    </source>
</evidence>
<evidence type="ECO:0000255" key="2">
    <source>
        <dbReference type="PROSITE-ProRule" id="PRU00037"/>
    </source>
</evidence>
<evidence type="ECO:0000305" key="3"/>
<organism>
    <name type="scientific">Xenopus tropicalis</name>
    <name type="common">Western clawed frog</name>
    <name type="synonym">Silurana tropicalis</name>
    <dbReference type="NCBI Taxonomy" id="8364"/>
    <lineage>
        <taxon>Eukaryota</taxon>
        <taxon>Metazoa</taxon>
        <taxon>Chordata</taxon>
        <taxon>Craniata</taxon>
        <taxon>Vertebrata</taxon>
        <taxon>Euteleostomi</taxon>
        <taxon>Amphibia</taxon>
        <taxon>Batrachia</taxon>
        <taxon>Anura</taxon>
        <taxon>Pipoidea</taxon>
        <taxon>Pipidae</taxon>
        <taxon>Xenopodinae</taxon>
        <taxon>Xenopus</taxon>
        <taxon>Silurana</taxon>
    </lineage>
</organism>
<name>KLH25_XENTR</name>
<gene>
    <name evidence="1" type="primary">klhl25</name>
</gene>
<sequence length="589" mass="65955">MSVTVHENRKSRTSTGSMNISLYHKLSHSDCVLNHLNTMRKQRLFTDVTLWAGNRSFPCHRAVLAACSQYFEAMFSNGLRESLDNTVNFHDSLHPEVLELLLDFAYSSKIIINEENAESLLEAGDMLQFHDIRDAACEFLEKNLYPSNCLGMMILSDAHQCQRLYELSLRTCLSNFATLHNTEDFCSLSKDMVLDLISSDELEIEDEQVVFNSVLHWVKEDLDKRKDYFPELLRKVRLALLPSELLKEAVVCEDLIIADERSKLIMDEAVVCKKKILQNDGVVTSLCAKPRKAGHTLLILGGQTFMCDKIYQVDHKAKEIIPKADLPSPRKEFSACAIGCKVYVTGGRGSENGVSKDVWVYDTINEEWSKSAPMLIARFGHGSAELENCLYVVGGHTAVAGVFPASPSVSLKQVEKYDPLTNKWTMMAPLRDGVSNAAVVSAKLKLFAFGGTSIHRDRVSKVQCYDPDENRWSIKAECPQPWRYTAAAVLGSQIFIMGGDTEFTAASAYRFDCETNQWTRIGDMTAKRMSCHALASGNKVYVVGGYFGTQRCKTLDCYDPTSDSWNSITSVPYSLIPTAFVSTWKHLPA</sequence>